<proteinExistence type="inferred from homology"/>
<protein>
    <recommendedName>
        <fullName evidence="1">Guanosine-5'-triphosphate,3'-diphosphate pyrophosphatase</fullName>
        <ecNumber evidence="1">3.6.1.40</ecNumber>
    </recommendedName>
    <alternativeName>
        <fullName evidence="1">Guanosine pentaphosphate phosphohydrolase</fullName>
    </alternativeName>
    <alternativeName>
        <fullName evidence="1">pppGpp-5'-phosphohydrolase</fullName>
    </alternativeName>
</protein>
<evidence type="ECO:0000255" key="1">
    <source>
        <dbReference type="HAMAP-Rule" id="MF_01550"/>
    </source>
</evidence>
<name>GPPA_ECOSM</name>
<keyword id="KW-0378">Hydrolase</keyword>
<feature type="chain" id="PRO_1000146871" description="Guanosine-5'-triphosphate,3'-diphosphate pyrophosphatase">
    <location>
        <begin position="1"/>
        <end position="494"/>
    </location>
</feature>
<dbReference type="EC" id="3.6.1.40" evidence="1"/>
<dbReference type="EMBL" id="CP000970">
    <property type="protein sequence ID" value="ACB17786.1"/>
    <property type="molecule type" value="Genomic_DNA"/>
</dbReference>
<dbReference type="RefSeq" id="WP_001314257.1">
    <property type="nucleotide sequence ID" value="NC_010498.1"/>
</dbReference>
<dbReference type="SMR" id="B1LLV2"/>
<dbReference type="KEGG" id="ecm:EcSMS35_4143"/>
<dbReference type="HOGENOM" id="CLU_025908_4_0_6"/>
<dbReference type="UniPathway" id="UPA00908">
    <property type="reaction ID" value="UER00885"/>
</dbReference>
<dbReference type="Proteomes" id="UP000007011">
    <property type="component" value="Chromosome"/>
</dbReference>
<dbReference type="GO" id="GO:0008894">
    <property type="term" value="F:guanosine-5'-triphosphate,3'-diphosphate diphosphatase activity"/>
    <property type="evidence" value="ECO:0007669"/>
    <property type="project" value="UniProtKB-UniRule"/>
</dbReference>
<dbReference type="GO" id="GO:0015974">
    <property type="term" value="P:guanosine pentaphosphate catabolic process"/>
    <property type="evidence" value="ECO:0007669"/>
    <property type="project" value="InterPro"/>
</dbReference>
<dbReference type="GO" id="GO:0015970">
    <property type="term" value="P:guanosine tetraphosphate biosynthetic process"/>
    <property type="evidence" value="ECO:0007669"/>
    <property type="project" value="UniProtKB-UniRule"/>
</dbReference>
<dbReference type="GO" id="GO:0015949">
    <property type="term" value="P:nucleobase-containing small molecule interconversion"/>
    <property type="evidence" value="ECO:0007669"/>
    <property type="project" value="TreeGrafter"/>
</dbReference>
<dbReference type="CDD" id="cd24117">
    <property type="entry name" value="ASKHA_NBD_EcGppA-like"/>
    <property type="match status" value="1"/>
</dbReference>
<dbReference type="FunFam" id="1.10.3210.10:FF:000004">
    <property type="entry name" value="Guanosine-5'-triphosphate,3'-diphosphate pyrophosphatase"/>
    <property type="match status" value="1"/>
</dbReference>
<dbReference type="FunFam" id="3.30.420.150:FF:000001">
    <property type="entry name" value="Guanosine-5'-triphosphate,3'-diphosphate pyrophosphatase"/>
    <property type="match status" value="1"/>
</dbReference>
<dbReference type="FunFam" id="3.30.420.40:FF:000023">
    <property type="entry name" value="Guanosine-5'-triphosphate,3'-diphosphate pyrophosphatase"/>
    <property type="match status" value="1"/>
</dbReference>
<dbReference type="Gene3D" id="3.30.420.40">
    <property type="match status" value="1"/>
</dbReference>
<dbReference type="Gene3D" id="3.30.420.150">
    <property type="entry name" value="Exopolyphosphatase. Domain 2"/>
    <property type="match status" value="1"/>
</dbReference>
<dbReference type="Gene3D" id="1.10.3210.10">
    <property type="entry name" value="Hypothetical protein af1432"/>
    <property type="match status" value="1"/>
</dbReference>
<dbReference type="HAMAP" id="MF_01550">
    <property type="entry name" value="GppA"/>
    <property type="match status" value="1"/>
</dbReference>
<dbReference type="InterPro" id="IPR043129">
    <property type="entry name" value="ATPase_NBD"/>
</dbReference>
<dbReference type="InterPro" id="IPR050273">
    <property type="entry name" value="GppA/Ppx_hydrolase"/>
</dbReference>
<dbReference type="InterPro" id="IPR023709">
    <property type="entry name" value="Guo-5TP_3DP_PyrP"/>
</dbReference>
<dbReference type="InterPro" id="IPR048950">
    <property type="entry name" value="Ppx_GppA_C"/>
</dbReference>
<dbReference type="InterPro" id="IPR003695">
    <property type="entry name" value="Ppx_GppA_N"/>
</dbReference>
<dbReference type="InterPro" id="IPR030673">
    <property type="entry name" value="PyroPPase_GppA_Ppx"/>
</dbReference>
<dbReference type="NCBIfam" id="NF008260">
    <property type="entry name" value="PRK11031.1"/>
    <property type="match status" value="1"/>
</dbReference>
<dbReference type="PANTHER" id="PTHR30005">
    <property type="entry name" value="EXOPOLYPHOSPHATASE"/>
    <property type="match status" value="1"/>
</dbReference>
<dbReference type="PANTHER" id="PTHR30005:SF0">
    <property type="entry name" value="RETROGRADE REGULATION PROTEIN 2"/>
    <property type="match status" value="1"/>
</dbReference>
<dbReference type="Pfam" id="PF02541">
    <property type="entry name" value="Ppx-GppA"/>
    <property type="match status" value="1"/>
</dbReference>
<dbReference type="Pfam" id="PF21447">
    <property type="entry name" value="Ppx-GppA_III"/>
    <property type="match status" value="1"/>
</dbReference>
<dbReference type="PIRSF" id="PIRSF001267">
    <property type="entry name" value="Pyrophosphatase_GppA_Ppx"/>
    <property type="match status" value="1"/>
</dbReference>
<dbReference type="SUPFAM" id="SSF53067">
    <property type="entry name" value="Actin-like ATPase domain"/>
    <property type="match status" value="2"/>
</dbReference>
<dbReference type="SUPFAM" id="SSF109604">
    <property type="entry name" value="HD-domain/PDEase-like"/>
    <property type="match status" value="1"/>
</dbReference>
<gene>
    <name evidence="1" type="primary">gppA</name>
    <name type="ordered locus">EcSMS35_4143</name>
</gene>
<organism>
    <name type="scientific">Escherichia coli (strain SMS-3-5 / SECEC)</name>
    <dbReference type="NCBI Taxonomy" id="439855"/>
    <lineage>
        <taxon>Bacteria</taxon>
        <taxon>Pseudomonadati</taxon>
        <taxon>Pseudomonadota</taxon>
        <taxon>Gammaproteobacteria</taxon>
        <taxon>Enterobacterales</taxon>
        <taxon>Enterobacteriaceae</taxon>
        <taxon>Escherichia</taxon>
    </lineage>
</organism>
<accession>B1LLV2</accession>
<reference key="1">
    <citation type="journal article" date="2008" name="J. Bacteriol.">
        <title>Insights into the environmental resistance gene pool from the genome sequence of the multidrug-resistant environmental isolate Escherichia coli SMS-3-5.</title>
        <authorList>
            <person name="Fricke W.F."/>
            <person name="Wright M.S."/>
            <person name="Lindell A.H."/>
            <person name="Harkins D.M."/>
            <person name="Baker-Austin C."/>
            <person name="Ravel J."/>
            <person name="Stepanauskas R."/>
        </authorList>
    </citation>
    <scope>NUCLEOTIDE SEQUENCE [LARGE SCALE GENOMIC DNA]</scope>
    <source>
        <strain>SMS-3-5 / SECEC</strain>
    </source>
</reference>
<comment type="function">
    <text evidence="1">Catalyzes the conversion of pppGpp to ppGpp. Guanosine pentaphosphate (pppGpp) is a cytoplasmic signaling molecule which together with ppGpp controls the 'stringent response', an adaptive process that allows bacteria to respond to amino acid starvation, resulting in the coordinated regulation of numerous cellular activities.</text>
</comment>
<comment type="catalytic activity">
    <reaction evidence="1">
        <text>guanosine 3'-diphosphate 5'-triphosphate + H2O = guanosine 3',5'-bis(diphosphate) + phosphate + H(+)</text>
        <dbReference type="Rhea" id="RHEA:13073"/>
        <dbReference type="ChEBI" id="CHEBI:15377"/>
        <dbReference type="ChEBI" id="CHEBI:15378"/>
        <dbReference type="ChEBI" id="CHEBI:43474"/>
        <dbReference type="ChEBI" id="CHEBI:77828"/>
        <dbReference type="ChEBI" id="CHEBI:142410"/>
        <dbReference type="EC" id="3.6.1.40"/>
    </reaction>
</comment>
<comment type="pathway">
    <text evidence="1">Purine metabolism; ppGpp biosynthesis; ppGpp from GTP: step 2/2.</text>
</comment>
<comment type="similarity">
    <text evidence="1">Belongs to the GppA/Ppx family. GppA subfamily.</text>
</comment>
<sequence length="494" mass="54945">MGSTSSLYAAIDLGSNSFHMLVVREVAGSIQTLTRIKRKVRLAAGLNSENALSNEAMERGWQCLRLFAERLQDIPPSQIRVVATATLRLAVNAGDFIAKAQEILGCPVQVISGEEEARLIYQGVAHTTGGADQRLVVDIGGASTELVTGTGAQTTSLFSLSMGCVTWLERYFADRNLGQENFDAAEKAAREVLRPVADELRYHGWKVCVGASGTVQALQEIMMAQGMDERITLEKLQQLKQRAIHCGRLEELEIDGLTLERALVFPSGLAILIAIFTELNIQCMTLAGGALREGLVYGMLHLTVEQDIRSRTLRNIQRRFMIDIDQAQRVAKVAANFFDQVENEWHLEAISRDLLISACQLHEIGLSVDFKQAPQHAAYLVRNLDLPGFTPAQKKLLATLLLNQTNPVDLSSLHQQNAVPPRVAEQLCRLLRLAIIFASRRRDDLVPEMTLQANHELLTLTLPQGWLTQHPLGKEIIDQESQWQSYVHWPLEVH</sequence>